<accession>D4GM14</accession>
<feature type="chain" id="PRO_0000412970" description="Probable Sec-independent protein translocase protein TatE">
    <location>
        <begin position="1"/>
        <end position="67"/>
    </location>
</feature>
<feature type="transmembrane region" description="Helical" evidence="1">
    <location>
        <begin position="1"/>
        <end position="21"/>
    </location>
</feature>
<feature type="region of interest" description="Disordered" evidence="2">
    <location>
        <begin position="44"/>
        <end position="67"/>
    </location>
</feature>
<dbReference type="EMBL" id="CP001875">
    <property type="protein sequence ID" value="ADD76284.1"/>
    <property type="molecule type" value="Genomic_DNA"/>
</dbReference>
<dbReference type="RefSeq" id="WP_013025006.1">
    <property type="nucleotide sequence ID" value="NC_013956.2"/>
</dbReference>
<dbReference type="SMR" id="D4GM14"/>
<dbReference type="STRING" id="706191.PANA_1117"/>
<dbReference type="GeneID" id="57269101"/>
<dbReference type="KEGG" id="pam:PANA_1117"/>
<dbReference type="eggNOG" id="COG1826">
    <property type="taxonomic scope" value="Bacteria"/>
</dbReference>
<dbReference type="HOGENOM" id="CLU_086034_5_3_6"/>
<dbReference type="Proteomes" id="UP000001702">
    <property type="component" value="Chromosome"/>
</dbReference>
<dbReference type="GO" id="GO:0033281">
    <property type="term" value="C:TAT protein transport complex"/>
    <property type="evidence" value="ECO:0007669"/>
    <property type="project" value="UniProtKB-UniRule"/>
</dbReference>
<dbReference type="GO" id="GO:0008320">
    <property type="term" value="F:protein transmembrane transporter activity"/>
    <property type="evidence" value="ECO:0007669"/>
    <property type="project" value="UniProtKB-UniRule"/>
</dbReference>
<dbReference type="GO" id="GO:0043953">
    <property type="term" value="P:protein transport by the Tat complex"/>
    <property type="evidence" value="ECO:0007669"/>
    <property type="project" value="UniProtKB-UniRule"/>
</dbReference>
<dbReference type="Gene3D" id="1.20.5.3310">
    <property type="match status" value="1"/>
</dbReference>
<dbReference type="HAMAP" id="MF_00236">
    <property type="entry name" value="TatA_E"/>
    <property type="match status" value="1"/>
</dbReference>
<dbReference type="HAMAP" id="MF_00903">
    <property type="entry name" value="TatE"/>
    <property type="match status" value="1"/>
</dbReference>
<dbReference type="InterPro" id="IPR003369">
    <property type="entry name" value="TatA/B/E"/>
</dbReference>
<dbReference type="InterPro" id="IPR006312">
    <property type="entry name" value="TatA/E"/>
</dbReference>
<dbReference type="InterPro" id="IPR024905">
    <property type="entry name" value="TatE"/>
</dbReference>
<dbReference type="NCBIfam" id="NF002448">
    <property type="entry name" value="PRK01614.1"/>
    <property type="match status" value="1"/>
</dbReference>
<dbReference type="NCBIfam" id="NF002960">
    <property type="entry name" value="PRK03625.1"/>
    <property type="match status" value="1"/>
</dbReference>
<dbReference type="NCBIfam" id="TIGR01411">
    <property type="entry name" value="tatAE"/>
    <property type="match status" value="1"/>
</dbReference>
<dbReference type="PANTHER" id="PTHR42982">
    <property type="entry name" value="SEC-INDEPENDENT PROTEIN TRANSLOCASE PROTEIN TATA"/>
    <property type="match status" value="1"/>
</dbReference>
<dbReference type="PANTHER" id="PTHR42982:SF5">
    <property type="entry name" value="SEC-INDEPENDENT PROTEIN TRANSLOCASE PROTEIN TATE"/>
    <property type="match status" value="1"/>
</dbReference>
<dbReference type="Pfam" id="PF02416">
    <property type="entry name" value="TatA_B_E"/>
    <property type="match status" value="1"/>
</dbReference>
<organism>
    <name type="scientific">Pantoea ananatis (strain LMG 20103)</name>
    <dbReference type="NCBI Taxonomy" id="706191"/>
    <lineage>
        <taxon>Bacteria</taxon>
        <taxon>Pseudomonadati</taxon>
        <taxon>Pseudomonadota</taxon>
        <taxon>Gammaproteobacteria</taxon>
        <taxon>Enterobacterales</taxon>
        <taxon>Erwiniaceae</taxon>
        <taxon>Pantoea</taxon>
    </lineage>
</organism>
<gene>
    <name evidence="1" type="primary">tatE</name>
    <name type="ordered locus">PANA_1117</name>
</gene>
<evidence type="ECO:0000255" key="1">
    <source>
        <dbReference type="HAMAP-Rule" id="MF_00903"/>
    </source>
</evidence>
<evidence type="ECO:0000256" key="2">
    <source>
        <dbReference type="SAM" id="MobiDB-lite"/>
    </source>
</evidence>
<proteinExistence type="inferred from homology"/>
<reference key="1">
    <citation type="journal article" date="2010" name="J. Bacteriol.">
        <title>Genome sequence of Pantoea ananatis LMG20103, the causative agent of Eucalyptus blight and dieback.</title>
        <authorList>
            <person name="De Maayer P."/>
            <person name="Chan W.Y."/>
            <person name="Venter S.N."/>
            <person name="Toth I.K."/>
            <person name="Birch P.R."/>
            <person name="Joubert F."/>
            <person name="Coutinho T.A."/>
        </authorList>
    </citation>
    <scope>NUCLEOTIDE SEQUENCE [LARGE SCALE GENOMIC DNA]</scope>
    <source>
        <strain>LMG 20103</strain>
    </source>
</reference>
<sequence length="67" mass="7086">MEGISIAKLLIIGALIVLLFGTNKLRSLGGDLGSAIKGFKKAMKDEDTSAARTTAEETPAERVSHKD</sequence>
<protein>
    <recommendedName>
        <fullName evidence="1">Probable Sec-independent protein translocase protein TatE</fullName>
    </recommendedName>
</protein>
<keyword id="KW-0997">Cell inner membrane</keyword>
<keyword id="KW-1003">Cell membrane</keyword>
<keyword id="KW-0472">Membrane</keyword>
<keyword id="KW-0653">Protein transport</keyword>
<keyword id="KW-1185">Reference proteome</keyword>
<keyword id="KW-0811">Translocation</keyword>
<keyword id="KW-0812">Transmembrane</keyword>
<keyword id="KW-1133">Transmembrane helix</keyword>
<keyword id="KW-0813">Transport</keyword>
<comment type="function">
    <text evidence="1">Part of the twin-arginine translocation (Tat) system that transports large folded proteins containing a characteristic twin-arginine motif in their signal peptide across membranes. TatE shares overlapping functions with TatA.</text>
</comment>
<comment type="subcellular location">
    <subcellularLocation>
        <location evidence="1">Cell inner membrane</location>
        <topology evidence="1">Single-pass membrane protein</topology>
    </subcellularLocation>
</comment>
<comment type="similarity">
    <text evidence="1">Belongs to the TatA/E family. TatE subfamily.</text>
</comment>
<name>TATE_PANAM</name>